<gene>
    <name evidence="1" type="primary">nudC</name>
    <name type="ordered locus">YPK_0349</name>
</gene>
<accession>B1JJK8</accession>
<comment type="function">
    <text evidence="1">mRNA decapping enzyme that specifically removes the nicotinamide adenine dinucleotide (NAD) cap from a subset of mRNAs by hydrolyzing the diphosphate linkage to produce nicotinamide mononucleotide (NMN) and 5' monophosphate mRNA. The NAD-cap is present at the 5'-end of some mRNAs and stabilizes RNA against 5'-processing. Has preference for mRNAs with a 5'-end purine. Catalyzes the hydrolysis of a broad range of dinucleotide pyrophosphates.</text>
</comment>
<comment type="catalytic activity">
    <reaction evidence="1">
        <text>a 5'-end NAD(+)-phospho-ribonucleoside in mRNA + H2O = a 5'-end phospho-adenosine-phospho-ribonucleoside in mRNA + beta-nicotinamide D-ribonucleotide + 2 H(+)</text>
        <dbReference type="Rhea" id="RHEA:60876"/>
        <dbReference type="Rhea" id="RHEA-COMP:15698"/>
        <dbReference type="Rhea" id="RHEA-COMP:15719"/>
        <dbReference type="ChEBI" id="CHEBI:14649"/>
        <dbReference type="ChEBI" id="CHEBI:15377"/>
        <dbReference type="ChEBI" id="CHEBI:15378"/>
        <dbReference type="ChEBI" id="CHEBI:144029"/>
        <dbReference type="ChEBI" id="CHEBI:144051"/>
    </reaction>
    <physiologicalReaction direction="left-to-right" evidence="1">
        <dbReference type="Rhea" id="RHEA:60877"/>
    </physiologicalReaction>
</comment>
<comment type="catalytic activity">
    <reaction evidence="1">
        <text>NAD(+) + H2O = beta-nicotinamide D-ribonucleotide + AMP + 2 H(+)</text>
        <dbReference type="Rhea" id="RHEA:11800"/>
        <dbReference type="ChEBI" id="CHEBI:14649"/>
        <dbReference type="ChEBI" id="CHEBI:15377"/>
        <dbReference type="ChEBI" id="CHEBI:15378"/>
        <dbReference type="ChEBI" id="CHEBI:57540"/>
        <dbReference type="ChEBI" id="CHEBI:456215"/>
        <dbReference type="EC" id="3.6.1.22"/>
    </reaction>
</comment>
<comment type="catalytic activity">
    <reaction evidence="1">
        <text>NADH + H2O = reduced beta-nicotinamide D-ribonucleotide + AMP + 2 H(+)</text>
        <dbReference type="Rhea" id="RHEA:48868"/>
        <dbReference type="ChEBI" id="CHEBI:15377"/>
        <dbReference type="ChEBI" id="CHEBI:15378"/>
        <dbReference type="ChEBI" id="CHEBI:57945"/>
        <dbReference type="ChEBI" id="CHEBI:90832"/>
        <dbReference type="ChEBI" id="CHEBI:456215"/>
        <dbReference type="EC" id="3.6.1.22"/>
    </reaction>
</comment>
<comment type="cofactor">
    <cofactor evidence="1">
        <name>Mg(2+)</name>
        <dbReference type="ChEBI" id="CHEBI:18420"/>
    </cofactor>
    <cofactor evidence="1">
        <name>Mn(2+)</name>
        <dbReference type="ChEBI" id="CHEBI:29035"/>
    </cofactor>
    <text evidence="1">Divalent metal cations. Mg(2+) or Mn(2+).</text>
</comment>
<comment type="cofactor">
    <cofactor evidence="1">
        <name>Zn(2+)</name>
        <dbReference type="ChEBI" id="CHEBI:29105"/>
    </cofactor>
    <text evidence="1">Binds 1 zinc ion per subunit.</text>
</comment>
<comment type="subunit">
    <text evidence="1">Homodimer.</text>
</comment>
<comment type="similarity">
    <text evidence="1">Belongs to the Nudix hydrolase family. NudC subfamily.</text>
</comment>
<dbReference type="EC" id="3.6.1.-" evidence="1"/>
<dbReference type="EC" id="3.6.1.22" evidence="1"/>
<dbReference type="EMBL" id="CP000950">
    <property type="protein sequence ID" value="ACA66659.1"/>
    <property type="molecule type" value="Genomic_DNA"/>
</dbReference>
<dbReference type="RefSeq" id="WP_011191554.1">
    <property type="nucleotide sequence ID" value="NZ_CP009792.1"/>
</dbReference>
<dbReference type="SMR" id="B1JJK8"/>
<dbReference type="GeneID" id="49787716"/>
<dbReference type="KEGG" id="ypy:YPK_0349"/>
<dbReference type="PATRIC" id="fig|502800.11.peg.953"/>
<dbReference type="GO" id="GO:0005829">
    <property type="term" value="C:cytosol"/>
    <property type="evidence" value="ECO:0007669"/>
    <property type="project" value="TreeGrafter"/>
</dbReference>
<dbReference type="GO" id="GO:0000287">
    <property type="term" value="F:magnesium ion binding"/>
    <property type="evidence" value="ECO:0007669"/>
    <property type="project" value="UniProtKB-UniRule"/>
</dbReference>
<dbReference type="GO" id="GO:0030145">
    <property type="term" value="F:manganese ion binding"/>
    <property type="evidence" value="ECO:0007669"/>
    <property type="project" value="UniProtKB-UniRule"/>
</dbReference>
<dbReference type="GO" id="GO:0000210">
    <property type="term" value="F:NAD+ diphosphatase activity"/>
    <property type="evidence" value="ECO:0007669"/>
    <property type="project" value="UniProtKB-UniRule"/>
</dbReference>
<dbReference type="GO" id="GO:0035529">
    <property type="term" value="F:NADH pyrophosphatase activity"/>
    <property type="evidence" value="ECO:0007669"/>
    <property type="project" value="TreeGrafter"/>
</dbReference>
<dbReference type="GO" id="GO:0110153">
    <property type="term" value="F:RNA NAD-cap (NMN-forming) hydrolase activity"/>
    <property type="evidence" value="ECO:0007669"/>
    <property type="project" value="RHEA"/>
</dbReference>
<dbReference type="GO" id="GO:0008270">
    <property type="term" value="F:zinc ion binding"/>
    <property type="evidence" value="ECO:0007669"/>
    <property type="project" value="UniProtKB-UniRule"/>
</dbReference>
<dbReference type="GO" id="GO:0019677">
    <property type="term" value="P:NAD catabolic process"/>
    <property type="evidence" value="ECO:0007669"/>
    <property type="project" value="TreeGrafter"/>
</dbReference>
<dbReference type="GO" id="GO:0006734">
    <property type="term" value="P:NADH metabolic process"/>
    <property type="evidence" value="ECO:0007669"/>
    <property type="project" value="TreeGrafter"/>
</dbReference>
<dbReference type="GO" id="GO:0006742">
    <property type="term" value="P:NADP catabolic process"/>
    <property type="evidence" value="ECO:0007669"/>
    <property type="project" value="TreeGrafter"/>
</dbReference>
<dbReference type="CDD" id="cd03429">
    <property type="entry name" value="NUDIX_NADH_pyrophosphatase_Nudt13"/>
    <property type="match status" value="1"/>
</dbReference>
<dbReference type="FunFam" id="3.90.79.10:FF:000004">
    <property type="entry name" value="NADH pyrophosphatase"/>
    <property type="match status" value="1"/>
</dbReference>
<dbReference type="FunFam" id="3.90.79.20:FF:000001">
    <property type="entry name" value="NADH pyrophosphatase"/>
    <property type="match status" value="1"/>
</dbReference>
<dbReference type="Gene3D" id="3.90.79.20">
    <property type="match status" value="1"/>
</dbReference>
<dbReference type="Gene3D" id="3.90.79.10">
    <property type="entry name" value="Nucleoside Triphosphate Pyrophosphohydrolase"/>
    <property type="match status" value="1"/>
</dbReference>
<dbReference type="HAMAP" id="MF_00297">
    <property type="entry name" value="Nudix_NudC"/>
    <property type="match status" value="1"/>
</dbReference>
<dbReference type="InterPro" id="IPR050241">
    <property type="entry name" value="NAD-cap_RNA_hydrolase_NudC"/>
</dbReference>
<dbReference type="InterPro" id="IPR049734">
    <property type="entry name" value="NudC-like_C"/>
</dbReference>
<dbReference type="InterPro" id="IPR015797">
    <property type="entry name" value="NUDIX_hydrolase-like_dom_sf"/>
</dbReference>
<dbReference type="InterPro" id="IPR020084">
    <property type="entry name" value="NUDIX_hydrolase_CS"/>
</dbReference>
<dbReference type="InterPro" id="IPR000086">
    <property type="entry name" value="NUDIX_hydrolase_dom"/>
</dbReference>
<dbReference type="InterPro" id="IPR022925">
    <property type="entry name" value="RNA_Hydrolase_NudC"/>
</dbReference>
<dbReference type="InterPro" id="IPR015376">
    <property type="entry name" value="Znr_NADH_PPase"/>
</dbReference>
<dbReference type="NCBIfam" id="NF001299">
    <property type="entry name" value="PRK00241.1"/>
    <property type="match status" value="1"/>
</dbReference>
<dbReference type="PANTHER" id="PTHR42904:SF6">
    <property type="entry name" value="NAD-CAPPED RNA HYDROLASE NUDT12"/>
    <property type="match status" value="1"/>
</dbReference>
<dbReference type="PANTHER" id="PTHR42904">
    <property type="entry name" value="NUDIX HYDROLASE, NUDC SUBFAMILY"/>
    <property type="match status" value="1"/>
</dbReference>
<dbReference type="Pfam" id="PF00293">
    <property type="entry name" value="NUDIX"/>
    <property type="match status" value="1"/>
</dbReference>
<dbReference type="Pfam" id="PF09297">
    <property type="entry name" value="Zn_ribbon_NUD"/>
    <property type="match status" value="1"/>
</dbReference>
<dbReference type="SUPFAM" id="SSF55811">
    <property type="entry name" value="Nudix"/>
    <property type="match status" value="2"/>
</dbReference>
<dbReference type="PROSITE" id="PS51462">
    <property type="entry name" value="NUDIX"/>
    <property type="match status" value="1"/>
</dbReference>
<dbReference type="PROSITE" id="PS00893">
    <property type="entry name" value="NUDIX_BOX"/>
    <property type="match status" value="1"/>
</dbReference>
<feature type="chain" id="PRO_1000115257" description="NAD-capped RNA hydrolase NudC">
    <location>
        <begin position="1"/>
        <end position="260"/>
    </location>
</feature>
<feature type="domain" description="Nudix hydrolase" evidence="1">
    <location>
        <begin position="125"/>
        <end position="248"/>
    </location>
</feature>
<feature type="short sequence motif" description="Nudix box" evidence="1">
    <location>
        <begin position="159"/>
        <end position="180"/>
    </location>
</feature>
<feature type="binding site" evidence="1">
    <location>
        <position position="25"/>
    </location>
    <ligand>
        <name>substrate</name>
    </ligand>
</feature>
<feature type="binding site" evidence="1">
    <location>
        <position position="69"/>
    </location>
    <ligand>
        <name>substrate</name>
    </ligand>
</feature>
<feature type="binding site" evidence="1">
    <location>
        <position position="98"/>
    </location>
    <ligand>
        <name>Zn(2+)</name>
        <dbReference type="ChEBI" id="CHEBI:29105"/>
    </ligand>
</feature>
<feature type="binding site" evidence="1">
    <location>
        <position position="101"/>
    </location>
    <ligand>
        <name>Zn(2+)</name>
        <dbReference type="ChEBI" id="CHEBI:29105"/>
    </ligand>
</feature>
<feature type="binding site" evidence="1">
    <location>
        <position position="111"/>
    </location>
    <ligand>
        <name>substrate</name>
    </ligand>
</feature>
<feature type="binding site" evidence="1">
    <location>
        <position position="116"/>
    </location>
    <ligand>
        <name>Zn(2+)</name>
        <dbReference type="ChEBI" id="CHEBI:29105"/>
    </ligand>
</feature>
<feature type="binding site" evidence="1">
    <location>
        <position position="119"/>
    </location>
    <ligand>
        <name>Zn(2+)</name>
        <dbReference type="ChEBI" id="CHEBI:29105"/>
    </ligand>
</feature>
<feature type="binding site" evidence="1">
    <location>
        <position position="124"/>
    </location>
    <ligand>
        <name>substrate</name>
    </ligand>
</feature>
<feature type="binding site" evidence="1">
    <location>
        <position position="158"/>
    </location>
    <ligand>
        <name>a divalent metal cation</name>
        <dbReference type="ChEBI" id="CHEBI:60240"/>
        <label>1</label>
    </ligand>
</feature>
<feature type="binding site" evidence="1">
    <location>
        <position position="174"/>
    </location>
    <ligand>
        <name>a divalent metal cation</name>
        <dbReference type="ChEBI" id="CHEBI:60240"/>
        <label>2</label>
    </ligand>
</feature>
<feature type="binding site" evidence="1">
    <location>
        <position position="174"/>
    </location>
    <ligand>
        <name>a divalent metal cation</name>
        <dbReference type="ChEBI" id="CHEBI:60240"/>
        <label>3</label>
    </ligand>
</feature>
<feature type="binding site" evidence="1">
    <location>
        <position position="178"/>
    </location>
    <ligand>
        <name>a divalent metal cation</name>
        <dbReference type="ChEBI" id="CHEBI:60240"/>
        <label>1</label>
    </ligand>
</feature>
<feature type="binding site" evidence="1">
    <location>
        <position position="178"/>
    </location>
    <ligand>
        <name>a divalent metal cation</name>
        <dbReference type="ChEBI" id="CHEBI:60240"/>
        <label>3</label>
    </ligand>
</feature>
<feature type="binding site" evidence="1">
    <location>
        <begin position="192"/>
        <end position="199"/>
    </location>
    <ligand>
        <name>substrate</name>
    </ligand>
</feature>
<feature type="binding site" evidence="1">
    <location>
        <position position="219"/>
    </location>
    <ligand>
        <name>a divalent metal cation</name>
        <dbReference type="ChEBI" id="CHEBI:60240"/>
        <label>1</label>
    </ligand>
</feature>
<feature type="binding site" evidence="1">
    <location>
        <position position="219"/>
    </location>
    <ligand>
        <name>a divalent metal cation</name>
        <dbReference type="ChEBI" id="CHEBI:60240"/>
        <label>3</label>
    </ligand>
</feature>
<feature type="binding site" evidence="1">
    <location>
        <position position="241"/>
    </location>
    <ligand>
        <name>substrate</name>
    </ligand>
</feature>
<name>NUDC_YERPY</name>
<reference key="1">
    <citation type="submission" date="2008-02" db="EMBL/GenBank/DDBJ databases">
        <title>Complete sequence of Yersinia pseudotuberculosis YPIII.</title>
        <authorList>
            <consortium name="US DOE Joint Genome Institute"/>
            <person name="Copeland A."/>
            <person name="Lucas S."/>
            <person name="Lapidus A."/>
            <person name="Glavina del Rio T."/>
            <person name="Dalin E."/>
            <person name="Tice H."/>
            <person name="Bruce D."/>
            <person name="Goodwin L."/>
            <person name="Pitluck S."/>
            <person name="Munk A.C."/>
            <person name="Brettin T."/>
            <person name="Detter J.C."/>
            <person name="Han C."/>
            <person name="Tapia R."/>
            <person name="Schmutz J."/>
            <person name="Larimer F."/>
            <person name="Land M."/>
            <person name="Hauser L."/>
            <person name="Challacombe J.F."/>
            <person name="Green L."/>
            <person name="Lindler L.E."/>
            <person name="Nikolich M.P."/>
            <person name="Richardson P."/>
        </authorList>
    </citation>
    <scope>NUCLEOTIDE SEQUENCE [LARGE SCALE GENOMIC DNA]</scope>
    <source>
        <strain>YPIII</strain>
    </source>
</reference>
<organism>
    <name type="scientific">Yersinia pseudotuberculosis serotype O:3 (strain YPIII)</name>
    <dbReference type="NCBI Taxonomy" id="502800"/>
    <lineage>
        <taxon>Bacteria</taxon>
        <taxon>Pseudomonadati</taxon>
        <taxon>Pseudomonadota</taxon>
        <taxon>Gammaproteobacteria</taxon>
        <taxon>Enterobacterales</taxon>
        <taxon>Yersiniaceae</taxon>
        <taxon>Yersinia</taxon>
    </lineage>
</organism>
<keyword id="KW-0378">Hydrolase</keyword>
<keyword id="KW-0460">Magnesium</keyword>
<keyword id="KW-0464">Manganese</keyword>
<keyword id="KW-0479">Metal-binding</keyword>
<keyword id="KW-0520">NAD</keyword>
<keyword id="KW-0862">Zinc</keyword>
<proteinExistence type="inferred from homology"/>
<sequence length="260" mass="29658">MELQLTGKESGWWIVSHENKLWLPKGELPQGNAANWSLQGATARQIGEWQGQPVWLIRQMMPSGMGSVRQLLDVDRGLFQLAGRGVQLAEFYRSHRFCGYCGHEMHASRTEWASLCNHCRERYYPQIAPCVIVAIRRGDEILLAQHVRHRGGINTVLAGFVEVGETLEQAVSREVLEESNIHIKNLRYVTSQPWPFPHSLMMAFMADYDSGELCHDPKELLNAGWYRYDQLPLLPPPGTVARRLIEDTVVLCREHSDLSQ</sequence>
<protein>
    <recommendedName>
        <fullName evidence="1">NAD-capped RNA hydrolase NudC</fullName>
        <shortName evidence="1">DeNADding enzyme NudC</shortName>
        <ecNumber evidence="1">3.6.1.-</ecNumber>
    </recommendedName>
    <alternativeName>
        <fullName evidence="1">NADH pyrophosphatase</fullName>
        <ecNumber evidence="1">3.6.1.22</ecNumber>
    </alternativeName>
</protein>
<evidence type="ECO:0000255" key="1">
    <source>
        <dbReference type="HAMAP-Rule" id="MF_00297"/>
    </source>
</evidence>